<protein>
    <recommendedName>
        <fullName>Synaptobrevin homolog YKT6-A</fullName>
        <ecNumber>2.3.1.-</ecNumber>
    </recommendedName>
    <alternativeName>
        <fullName>Xsnare1</fullName>
    </alternativeName>
</protein>
<organism>
    <name type="scientific">Xenopus laevis</name>
    <name type="common">African clawed frog</name>
    <dbReference type="NCBI Taxonomy" id="8355"/>
    <lineage>
        <taxon>Eukaryota</taxon>
        <taxon>Metazoa</taxon>
        <taxon>Chordata</taxon>
        <taxon>Craniata</taxon>
        <taxon>Vertebrata</taxon>
        <taxon>Euteleostomi</taxon>
        <taxon>Amphibia</taxon>
        <taxon>Batrachia</taxon>
        <taxon>Anura</taxon>
        <taxon>Pipoidea</taxon>
        <taxon>Pipidae</taxon>
        <taxon>Xenopodinae</taxon>
        <taxon>Xenopus</taxon>
        <taxon>Xenopus</taxon>
    </lineage>
</organism>
<accession>Q6DDU7</accession>
<accession>O73865</accession>
<feature type="chain" id="PRO_0000280713" description="Synaptobrevin homolog YKT6-A">
    <location>
        <begin position="1"/>
        <end position="195"/>
    </location>
</feature>
<feature type="propeptide" id="PRO_0000396665" description="Removed in mature form" evidence="1">
    <location>
        <begin position="196"/>
        <end position="198"/>
    </location>
</feature>
<feature type="domain" description="Longin" evidence="3">
    <location>
        <begin position="8"/>
        <end position="127"/>
    </location>
</feature>
<feature type="domain" description="v-SNARE coiled-coil homology" evidence="4">
    <location>
        <begin position="138"/>
        <end position="198"/>
    </location>
</feature>
<feature type="modified residue" description="Cysteine methyl ester" evidence="1">
    <location>
        <position position="195"/>
    </location>
</feature>
<feature type="lipid moiety-binding region" description="S-palmitoyl cysteine" evidence="1">
    <location>
        <position position="194"/>
    </location>
</feature>
<feature type="lipid moiety-binding region" description="S-farnesyl cysteine" evidence="1">
    <location>
        <position position="195"/>
    </location>
</feature>
<feature type="sequence conflict" description="In Ref. 1; AAC32182." evidence="6" ref="1">
    <original>S</original>
    <variation>P</variation>
    <location>
        <position position="27"/>
    </location>
</feature>
<gene>
    <name type="primary">ykt6-a</name>
</gene>
<dbReference type="EC" id="2.3.1.-"/>
<dbReference type="EMBL" id="AF067648">
    <property type="protein sequence ID" value="AAC32182.1"/>
    <property type="molecule type" value="mRNA"/>
</dbReference>
<dbReference type="EMBL" id="BC077411">
    <property type="protein sequence ID" value="AAH77411.1"/>
    <property type="molecule type" value="mRNA"/>
</dbReference>
<dbReference type="PIR" id="JE0228">
    <property type="entry name" value="JE0228"/>
</dbReference>
<dbReference type="RefSeq" id="NP_001081758.1">
    <property type="nucleotide sequence ID" value="NM_001088289.1"/>
</dbReference>
<dbReference type="RefSeq" id="XP_018109622.1">
    <property type="nucleotide sequence ID" value="XM_018254133.1"/>
</dbReference>
<dbReference type="RefSeq" id="XP_018109623.1">
    <property type="nucleotide sequence ID" value="XM_018254134.1"/>
</dbReference>
<dbReference type="RefSeq" id="XP_018109624.1">
    <property type="nucleotide sequence ID" value="XM_018254135.1"/>
</dbReference>
<dbReference type="SMR" id="Q6DDU7"/>
<dbReference type="BioGRID" id="99369">
    <property type="interactions" value="1"/>
</dbReference>
<dbReference type="DNASU" id="398034"/>
<dbReference type="GeneID" id="398034"/>
<dbReference type="KEGG" id="xla:398034"/>
<dbReference type="AGR" id="Xenbase:XB-GENE-949734"/>
<dbReference type="CTD" id="398034"/>
<dbReference type="Xenbase" id="XB-GENE-949734">
    <property type="gene designation" value="ykt6.S"/>
</dbReference>
<dbReference type="OMA" id="FAYCVYG"/>
<dbReference type="OrthoDB" id="27923at2759"/>
<dbReference type="Proteomes" id="UP000186698">
    <property type="component" value="Chromosome 3S"/>
</dbReference>
<dbReference type="Bgee" id="398034">
    <property type="expression patterns" value="Expressed in egg cell and 19 other cell types or tissues"/>
</dbReference>
<dbReference type="GO" id="GO:0030659">
    <property type="term" value="C:cytoplasmic vesicle membrane"/>
    <property type="evidence" value="ECO:0007669"/>
    <property type="project" value="UniProtKB-SubCell"/>
</dbReference>
<dbReference type="GO" id="GO:0005829">
    <property type="term" value="C:cytosol"/>
    <property type="evidence" value="ECO:0007669"/>
    <property type="project" value="UniProtKB-SubCell"/>
</dbReference>
<dbReference type="GO" id="GO:0005794">
    <property type="term" value="C:Golgi apparatus"/>
    <property type="evidence" value="ECO:0000318"/>
    <property type="project" value="GO_Central"/>
</dbReference>
<dbReference type="GO" id="GO:0000139">
    <property type="term" value="C:Golgi membrane"/>
    <property type="evidence" value="ECO:0007669"/>
    <property type="project" value="UniProtKB-SubCell"/>
</dbReference>
<dbReference type="GO" id="GO:0005484">
    <property type="term" value="F:SNAP receptor activity"/>
    <property type="evidence" value="ECO:0000318"/>
    <property type="project" value="GO_Central"/>
</dbReference>
<dbReference type="GO" id="GO:0016740">
    <property type="term" value="F:transferase activity"/>
    <property type="evidence" value="ECO:0007669"/>
    <property type="project" value="UniProtKB-KW"/>
</dbReference>
<dbReference type="GO" id="GO:0006888">
    <property type="term" value="P:endoplasmic reticulum to Golgi vesicle-mediated transport"/>
    <property type="evidence" value="ECO:0000318"/>
    <property type="project" value="GO_Central"/>
</dbReference>
<dbReference type="GO" id="GO:0015031">
    <property type="term" value="P:protein transport"/>
    <property type="evidence" value="ECO:0007669"/>
    <property type="project" value="UniProtKB-KW"/>
</dbReference>
<dbReference type="CDD" id="cd14824">
    <property type="entry name" value="Longin"/>
    <property type="match status" value="1"/>
</dbReference>
<dbReference type="CDD" id="cd15867">
    <property type="entry name" value="R-SNARE_YKT6"/>
    <property type="match status" value="1"/>
</dbReference>
<dbReference type="FunFam" id="3.30.450.50:FF:000013">
    <property type="entry name" value="Synaptobrevin homolog YKT6"/>
    <property type="match status" value="1"/>
</dbReference>
<dbReference type="FunFam" id="1.20.5.110:FF:000020">
    <property type="entry name" value="synaptobrevin homolog YKT6"/>
    <property type="match status" value="1"/>
</dbReference>
<dbReference type="Gene3D" id="1.20.5.110">
    <property type="match status" value="1"/>
</dbReference>
<dbReference type="Gene3D" id="3.30.450.50">
    <property type="entry name" value="Longin domain"/>
    <property type="match status" value="1"/>
</dbReference>
<dbReference type="InterPro" id="IPR011012">
    <property type="entry name" value="Longin-like_dom_sf"/>
</dbReference>
<dbReference type="InterPro" id="IPR010908">
    <property type="entry name" value="Longin_dom"/>
</dbReference>
<dbReference type="InterPro" id="IPR045848">
    <property type="entry name" value="R-SNARE_YKT6"/>
</dbReference>
<dbReference type="InterPro" id="IPR042855">
    <property type="entry name" value="V_SNARE_CC"/>
</dbReference>
<dbReference type="PANTHER" id="PTHR45806">
    <property type="entry name" value="SYNAPTOBREVIN HOMOLOG YKT6"/>
    <property type="match status" value="1"/>
</dbReference>
<dbReference type="PANTHER" id="PTHR45806:SF1">
    <property type="entry name" value="SYNAPTOBREVIN HOMOLOG YKT6"/>
    <property type="match status" value="1"/>
</dbReference>
<dbReference type="Pfam" id="PF13774">
    <property type="entry name" value="Longin"/>
    <property type="match status" value="1"/>
</dbReference>
<dbReference type="Pfam" id="PF00957">
    <property type="entry name" value="Synaptobrevin"/>
    <property type="match status" value="1"/>
</dbReference>
<dbReference type="SMART" id="SM01270">
    <property type="entry name" value="Longin"/>
    <property type="match status" value="1"/>
</dbReference>
<dbReference type="SUPFAM" id="SSF58038">
    <property type="entry name" value="SNARE fusion complex"/>
    <property type="match status" value="1"/>
</dbReference>
<dbReference type="SUPFAM" id="SSF64356">
    <property type="entry name" value="SNARE-like"/>
    <property type="match status" value="1"/>
</dbReference>
<dbReference type="PROSITE" id="PS50859">
    <property type="entry name" value="LONGIN"/>
    <property type="match status" value="1"/>
</dbReference>
<dbReference type="PROSITE" id="PS50892">
    <property type="entry name" value="V_SNARE"/>
    <property type="match status" value="1"/>
</dbReference>
<reference key="1">
    <citation type="journal article" date="1998" name="Biochem. Biophys. Res. Commun.">
        <title>Identification and expression study of a Xenopus homologue of prenylated SNARE gene.</title>
        <authorList>
            <person name="Park H.-S."/>
            <person name="Kim M."/>
            <person name="Shim S."/>
            <person name="Han J.-K."/>
        </authorList>
    </citation>
    <scope>NUCLEOTIDE SEQUENCE [MRNA]</scope>
    <scope>DEVELOPMENTAL STAGE</scope>
    <source>
        <tissue>Embryo</tissue>
    </source>
</reference>
<reference key="2">
    <citation type="submission" date="2004-07" db="EMBL/GenBank/DDBJ databases">
        <authorList>
            <consortium name="NIH - Xenopus Gene Collection (XGC) project"/>
        </authorList>
    </citation>
    <scope>NUCLEOTIDE SEQUENCE [LARGE SCALE MRNA]</scope>
    <source>
        <tissue>Embryo</tissue>
    </source>
</reference>
<comment type="function">
    <text evidence="2">Vesicular soluble NSF attachment protein receptor (v-SNARE) mediating vesicle docking and fusion to a specific acceptor cellular compartment. Functions in endoplasmic reticulum to Golgi transport; as part of a SNARE complex composed of GOSR1, GOSR2 and STX5. Functions in early/recycling endosome to TGN transport; as part of a SNARE complex composed of BET1L, GOSR1 and STX5. Has a S-palmitoyl transferase activity.</text>
</comment>
<comment type="subcellular location">
    <subcellularLocation>
        <location evidence="1">Cytoplasm</location>
        <location evidence="1">Cytosol</location>
    </subcellularLocation>
    <subcellularLocation>
        <location evidence="1">Cytoplasmic vesicle membrane</location>
        <topology evidence="1">Lipid-anchor</topology>
        <orientation evidence="1">Cytoplasmic side</orientation>
    </subcellularLocation>
    <subcellularLocation>
        <location evidence="1">Golgi apparatus membrane</location>
        <topology evidence="1">Lipid-anchor</topology>
        <orientation evidence="1">Cytoplasmic side</orientation>
    </subcellularLocation>
    <text evidence="1">Probably cycles through vesicles between Golgi and endosomes.</text>
</comment>
<comment type="developmental stage">
    <text evidence="5">Maternally inherited. Detected in oocytes and eggs. Expression declines during early development and is not detected in neurula, tailbud and tadpole embryos.</text>
</comment>
<comment type="domain">
    <text evidence="1">The longin domain regulates palmitoylation and membrane targeting.</text>
</comment>
<comment type="PTM">
    <text evidence="2">Palmitoylated; catalyzes its own palmitoylation. Palmitoylation is required for Golgi targeting.</text>
</comment>
<comment type="PTM">
    <text evidence="2">Farnesylation is required for Golgi targeting.</text>
</comment>
<comment type="similarity">
    <text evidence="6">Belongs to the synaptobrevin family.</text>
</comment>
<keyword id="KW-0175">Coiled coil</keyword>
<keyword id="KW-0963">Cytoplasm</keyword>
<keyword id="KW-0968">Cytoplasmic vesicle</keyword>
<keyword id="KW-0931">ER-Golgi transport</keyword>
<keyword id="KW-0333">Golgi apparatus</keyword>
<keyword id="KW-0449">Lipoprotein</keyword>
<keyword id="KW-0472">Membrane</keyword>
<keyword id="KW-0488">Methylation</keyword>
<keyword id="KW-0564">Palmitate</keyword>
<keyword id="KW-0636">Prenylation</keyword>
<keyword id="KW-0653">Protein transport</keyword>
<keyword id="KW-1185">Reference proteome</keyword>
<keyword id="KW-0808">Transferase</keyword>
<keyword id="KW-0813">Transport</keyword>
<sequence length="198" mass="22611">MKLYSLSVLYKGENKVHLLKSAYDVSSFSFFQRSSIQEFMAFTSQLIVERSDKGSRSSVKEQEYLCHVYVRNDSLAGVVIADNEYPPRVCFTLLEKVLEEFSTQVDRIDWPSGSPATIQYNALDSYLSKYQNPRDADPMSKVQAELDETKIILHNTMESLLQRGEKLDDLVSKSEVLGTQSKAFYKTARKQNSCCDIM</sequence>
<name>YKT6A_XENLA</name>
<proteinExistence type="evidence at transcript level"/>
<evidence type="ECO:0000250" key="1"/>
<evidence type="ECO:0000250" key="2">
    <source>
        <dbReference type="UniProtKB" id="O15498"/>
    </source>
</evidence>
<evidence type="ECO:0000255" key="3">
    <source>
        <dbReference type="PROSITE-ProRule" id="PRU00231"/>
    </source>
</evidence>
<evidence type="ECO:0000255" key="4">
    <source>
        <dbReference type="PROSITE-ProRule" id="PRU00290"/>
    </source>
</evidence>
<evidence type="ECO:0000269" key="5">
    <source>
    </source>
</evidence>
<evidence type="ECO:0000305" key="6"/>